<accession>P37167</accession>
<protein>
    <recommendedName>
        <fullName>Actophorin</fullName>
    </recommendedName>
</protein>
<dbReference type="EMBL" id="M93361">
    <property type="protein sequence ID" value="AAA02909.1"/>
    <property type="molecule type" value="mRNA"/>
</dbReference>
<dbReference type="PDB" id="1AHQ">
    <property type="method" value="X-ray"/>
    <property type="resolution" value="2.30 A"/>
    <property type="chains" value="A=2-138"/>
</dbReference>
<dbReference type="PDB" id="1CNU">
    <property type="method" value="X-ray"/>
    <property type="resolution" value="2.25 A"/>
    <property type="chains" value="A=2-138"/>
</dbReference>
<dbReference type="PDB" id="7RTX">
    <property type="method" value="X-ray"/>
    <property type="resolution" value="1.65 A"/>
    <property type="chains" value="A=2-138"/>
</dbReference>
<dbReference type="PDB" id="7SOG">
    <property type="method" value="X-ray"/>
    <property type="resolution" value="1.74 A"/>
    <property type="chains" value="A/B=2-135"/>
</dbReference>
<dbReference type="PDBsum" id="1AHQ"/>
<dbReference type="PDBsum" id="1CNU"/>
<dbReference type="PDBsum" id="7RTX"/>
<dbReference type="PDBsum" id="7SOG"/>
<dbReference type="SMR" id="P37167"/>
<dbReference type="VEuPathDB" id="AmoebaDB:ACA1_296340"/>
<dbReference type="OMA" id="WSMIYAT"/>
<dbReference type="EvolutionaryTrace" id="P37167"/>
<dbReference type="GO" id="GO:0015629">
    <property type="term" value="C:actin cytoskeleton"/>
    <property type="evidence" value="ECO:0007669"/>
    <property type="project" value="InterPro"/>
</dbReference>
<dbReference type="GO" id="GO:0005737">
    <property type="term" value="C:cytoplasm"/>
    <property type="evidence" value="ECO:0007669"/>
    <property type="project" value="UniProtKB-SubCell"/>
</dbReference>
<dbReference type="GO" id="GO:0003779">
    <property type="term" value="F:actin binding"/>
    <property type="evidence" value="ECO:0007669"/>
    <property type="project" value="UniProtKB-KW"/>
</dbReference>
<dbReference type="GO" id="GO:0030042">
    <property type="term" value="P:actin filament depolymerization"/>
    <property type="evidence" value="ECO:0007669"/>
    <property type="project" value="InterPro"/>
</dbReference>
<dbReference type="CDD" id="cd11286">
    <property type="entry name" value="ADF_cofilin_like"/>
    <property type="match status" value="1"/>
</dbReference>
<dbReference type="Gene3D" id="3.40.20.10">
    <property type="entry name" value="Severin"/>
    <property type="match status" value="1"/>
</dbReference>
<dbReference type="InterPro" id="IPR002108">
    <property type="entry name" value="ADF-H"/>
</dbReference>
<dbReference type="InterPro" id="IPR029006">
    <property type="entry name" value="ADF-H/Gelsolin-like_dom_sf"/>
</dbReference>
<dbReference type="InterPro" id="IPR017904">
    <property type="entry name" value="ADF/Cofilin"/>
</dbReference>
<dbReference type="PANTHER" id="PTHR11913">
    <property type="entry name" value="COFILIN-RELATED"/>
    <property type="match status" value="1"/>
</dbReference>
<dbReference type="Pfam" id="PF00241">
    <property type="entry name" value="Cofilin_ADF"/>
    <property type="match status" value="1"/>
</dbReference>
<dbReference type="PRINTS" id="PR00006">
    <property type="entry name" value="COFILIN"/>
</dbReference>
<dbReference type="SMART" id="SM00102">
    <property type="entry name" value="ADF"/>
    <property type="match status" value="1"/>
</dbReference>
<dbReference type="SUPFAM" id="SSF55753">
    <property type="entry name" value="Actin depolymerizing proteins"/>
    <property type="match status" value="1"/>
</dbReference>
<dbReference type="PROSITE" id="PS51263">
    <property type="entry name" value="ADF_H"/>
    <property type="match status" value="1"/>
</dbReference>
<organism>
    <name type="scientific">Acanthamoeba castellanii</name>
    <name type="common">Amoeba</name>
    <dbReference type="NCBI Taxonomy" id="5755"/>
    <lineage>
        <taxon>Eukaryota</taxon>
        <taxon>Amoebozoa</taxon>
        <taxon>Discosea</taxon>
        <taxon>Longamoebia</taxon>
        <taxon>Centramoebida</taxon>
        <taxon>Acanthamoebidae</taxon>
        <taxon>Acanthamoeba</taxon>
    </lineage>
</organism>
<evidence type="ECO:0000255" key="1">
    <source>
        <dbReference type="PROSITE-ProRule" id="PRU00599"/>
    </source>
</evidence>
<evidence type="ECO:0000269" key="2">
    <source>
    </source>
</evidence>
<evidence type="ECO:0000305" key="3"/>
<evidence type="ECO:0007829" key="4">
    <source>
        <dbReference type="PDB" id="7RTX"/>
    </source>
</evidence>
<reference key="1">
    <citation type="journal article" date="1993" name="Biochemistry">
        <title>Primary structure of and studies on Acanthamoeba actophorin.</title>
        <authorList>
            <person name="Quirk S."/>
            <person name="Maciver S.K."/>
            <person name="Ampe C."/>
            <person name="Doberstein S.K."/>
            <person name="Kaiser D.A."/>
            <person name="van Damme J."/>
            <person name="Vandekerckhove J."/>
            <person name="Pollard T.D."/>
        </authorList>
    </citation>
    <scope>NUCLEOTIDE SEQUENCE [MRNA]</scope>
    <scope>PROTEIN SEQUENCE OF 2-106</scope>
    <scope>CRYSTALLIZATION</scope>
</reference>
<reference key="2">
    <citation type="journal article" date="1997" name="Nat. Struct. Biol.">
        <title>Crystal structure of the actin-binding protein actophorin from Acanthamoeba.</title>
        <authorList>
            <person name="Leonard S.A."/>
            <person name="Gittis A.G."/>
            <person name="Petrella E.C."/>
            <person name="Pollard T.D."/>
            <person name="Lattman E.E."/>
        </authorList>
    </citation>
    <scope>X-RAY CRYSTALLOGRAPHY (2.3 ANGSTROMS)</scope>
</reference>
<reference key="3">
    <citation type="journal article" date="1998" name="J. Biol. Chem.">
        <title>Interaction of actin monomers with Acanthamoeba actophorin (ADF/cofilin) and profilin.</title>
        <authorList>
            <person name="Blanchoin L."/>
            <person name="Pollard T.D."/>
        </authorList>
    </citation>
    <scope>X-RAY CRYSTALLOGRAPHY (2.25 ANGSTROMS)</scope>
</reference>
<comment type="function">
    <text>Forms a one to one complex with monomeric actin. Can regulate the pool available for polymerization. Severs actin filaments in a dose-dependent manner.</text>
</comment>
<comment type="subunit">
    <text>Monomer.</text>
</comment>
<comment type="subcellular location">
    <subcellularLocation>
        <location>Cytoplasm</location>
    </subcellularLocation>
</comment>
<comment type="similarity">
    <text evidence="3">Belongs to the actin-binding proteins ADF family.</text>
</comment>
<name>ACTP_ACACA</name>
<keyword id="KW-0002">3D-structure</keyword>
<keyword id="KW-0009">Actin-binding</keyword>
<keyword id="KW-0963">Cytoplasm</keyword>
<keyword id="KW-0903">Direct protein sequencing</keyword>
<sequence>MSGIAVSDDCVQKFNELKLGHQHRYVTFKMNASNTEVVVEHVGGPNATYEDFKSQLPERDCRYAIFDYEFQVDGGQRNKITFILWAPDSAPIKSKMMYTSTKDSIKKKLVGIQVEVQATDAAEISEDAVSERAKKDVK</sequence>
<feature type="initiator methionine" description="Removed" evidence="2">
    <location>
        <position position="1"/>
    </location>
</feature>
<feature type="chain" id="PRO_0000214940" description="Actophorin">
    <location>
        <begin position="2"/>
        <end position="138"/>
    </location>
</feature>
<feature type="domain" description="ADF-H" evidence="1">
    <location>
        <begin position="3"/>
        <end position="134"/>
    </location>
</feature>
<feature type="modified residue" description="Blocked amino end (Ser)">
    <location>
        <position position="2"/>
    </location>
</feature>
<feature type="helix" evidence="4">
    <location>
        <begin position="8"/>
        <end position="18"/>
    </location>
</feature>
<feature type="strand" evidence="4">
    <location>
        <begin position="24"/>
        <end position="30"/>
    </location>
</feature>
<feature type="strand" evidence="4">
    <location>
        <begin position="34"/>
        <end position="43"/>
    </location>
</feature>
<feature type="helix" evidence="4">
    <location>
        <begin position="49"/>
        <end position="53"/>
    </location>
</feature>
<feature type="strand" evidence="4">
    <location>
        <begin position="62"/>
        <end position="72"/>
    </location>
</feature>
<feature type="strand" evidence="4">
    <location>
        <begin position="75"/>
        <end position="85"/>
    </location>
</feature>
<feature type="helix" evidence="4">
    <location>
        <begin position="92"/>
        <end position="108"/>
    </location>
</feature>
<feature type="strand" evidence="4">
    <location>
        <begin position="114"/>
        <end position="118"/>
    </location>
</feature>
<feature type="helix" evidence="4">
    <location>
        <begin position="122"/>
        <end position="124"/>
    </location>
</feature>
<feature type="helix" evidence="4">
    <location>
        <begin position="126"/>
        <end position="133"/>
    </location>
</feature>
<proteinExistence type="evidence at protein level"/>